<sequence length="576" mass="61598">MEQVDSSTELHLNRKDLAALAEDVVKEEVILESSSHHHHHHHHQLDTKVRMVTSSSNDNSGSGGASGGTSGAGGGNGGGGVVSVPVSLPIGSMITGTTFNVITPDQLPPHFKPMLCVDNNGYLSGSTVSMGNDLKTIVIQQQQTQPGGGGGGANNAGTNTTATNTIGLNHDGSGSNNSHDSLATLEHAAGGASGVGGGGGGTGGGSSGWSENPSTQHNEVFQIRCKTTCAELYRSKLGSGGRGRCVKYKDKWHTPSEFEHVCGRGSSKDWKRSIKYGGKSLQSLIDEGTLTPHATNCSCTVCCDDEAGESASGPVRLFTPYKRRKRNQTDLDMESGPKRKRNTHHSNNNNSNTNNNNTSGSGANNCVDVTAAVAAATASVVDENNMFLSEENITSKDEPWAALNDSLDTSTELVDQSQMGNTYERETFVVNINDGSSIAVLDTSQSMKNIEHVYCTMVKATNDFKRMLNDMKQSFERRIEVLQKERDAAVSAMRVQVHADIDDPNISGSLHGNEIISAKKCANCNREALAECSLCRKTPYCSEFCQRKDWNAHQVECTRNPQTTTQQVMLLIDDQS</sequence>
<protein>
    <recommendedName>
        <fullName>Deformed epidermal autoregulatory factor 1</fullName>
        <shortName>Protein DEAF-1</shortName>
    </recommendedName>
</protein>
<keyword id="KW-0903">Direct protein sequencing</keyword>
<keyword id="KW-0238">DNA-binding</keyword>
<keyword id="KW-0479">Metal-binding</keyword>
<keyword id="KW-0539">Nucleus</keyword>
<keyword id="KW-1185">Reference proteome</keyword>
<keyword id="KW-0804">Transcription</keyword>
<keyword id="KW-0805">Transcription regulation</keyword>
<keyword id="KW-0862">Zinc</keyword>
<keyword id="KW-0863">Zinc-finger</keyword>
<organism>
    <name type="scientific">Drosophila melanogaster</name>
    <name type="common">Fruit fly</name>
    <dbReference type="NCBI Taxonomy" id="7227"/>
    <lineage>
        <taxon>Eukaryota</taxon>
        <taxon>Metazoa</taxon>
        <taxon>Ecdysozoa</taxon>
        <taxon>Arthropoda</taxon>
        <taxon>Hexapoda</taxon>
        <taxon>Insecta</taxon>
        <taxon>Pterygota</taxon>
        <taxon>Neoptera</taxon>
        <taxon>Endopterygota</taxon>
        <taxon>Diptera</taxon>
        <taxon>Brachycera</taxon>
        <taxon>Muscomorpha</taxon>
        <taxon>Ephydroidea</taxon>
        <taxon>Drosophilidae</taxon>
        <taxon>Drosophila</taxon>
        <taxon>Sophophora</taxon>
    </lineage>
</organism>
<comment type="function">
    <text>Transcription factor that binds the homeotic Deformed (Dfd) response element. High affinity binding sites contain at least 1 TTCG motif surrounded by additional TCG sequences. May be involved in the selective action of Dfd on these sites without binding directly to the Dfd protein. Requirement of DEAF1 activity may be a common feature of enhancers targeted by Dfd.</text>
</comment>
<comment type="subcellular location">
    <subcellularLocation>
        <location>Nucleus</location>
    </subcellularLocation>
</comment>
<comment type="developmental stage">
    <text>Ubiquitous throughout embryogenesis. Highly expressed in stage 3 embryo indicating that it is maternally provided. After stage 15, it is more prominent in the central nervous system.</text>
</comment>
<name>DEAF1_DROME</name>
<reference key="1">
    <citation type="journal article" date="1996" name="EMBO J.">
        <title>DEAF-1, a novel protein that binds an essential region in a Deformed response element.</title>
        <authorList>
            <person name="Gross C.T."/>
            <person name="McGinnis W."/>
        </authorList>
    </citation>
    <scope>NUCLEOTIDE SEQUENCE [MRNA]</scope>
    <scope>PROTEIN SEQUENCE OF 252-264 AND 495-519</scope>
    <source>
        <tissue>Embryo</tissue>
    </source>
</reference>
<reference key="2">
    <citation type="journal article" date="2000" name="Science">
        <title>The genome sequence of Drosophila melanogaster.</title>
        <authorList>
            <person name="Adams M.D."/>
            <person name="Celniker S.E."/>
            <person name="Holt R.A."/>
            <person name="Evans C.A."/>
            <person name="Gocayne J.D."/>
            <person name="Amanatides P.G."/>
            <person name="Scherer S.E."/>
            <person name="Li P.W."/>
            <person name="Hoskins R.A."/>
            <person name="Galle R.F."/>
            <person name="George R.A."/>
            <person name="Lewis S.E."/>
            <person name="Richards S."/>
            <person name="Ashburner M."/>
            <person name="Henderson S.N."/>
            <person name="Sutton G.G."/>
            <person name="Wortman J.R."/>
            <person name="Yandell M.D."/>
            <person name="Zhang Q."/>
            <person name="Chen L.X."/>
            <person name="Brandon R.C."/>
            <person name="Rogers Y.-H.C."/>
            <person name="Blazej R.G."/>
            <person name="Champe M."/>
            <person name="Pfeiffer B.D."/>
            <person name="Wan K.H."/>
            <person name="Doyle C."/>
            <person name="Baxter E.G."/>
            <person name="Helt G."/>
            <person name="Nelson C.R."/>
            <person name="Miklos G.L.G."/>
            <person name="Abril J.F."/>
            <person name="Agbayani A."/>
            <person name="An H.-J."/>
            <person name="Andrews-Pfannkoch C."/>
            <person name="Baldwin D."/>
            <person name="Ballew R.M."/>
            <person name="Basu A."/>
            <person name="Baxendale J."/>
            <person name="Bayraktaroglu L."/>
            <person name="Beasley E.M."/>
            <person name="Beeson K.Y."/>
            <person name="Benos P.V."/>
            <person name="Berman B.P."/>
            <person name="Bhandari D."/>
            <person name="Bolshakov S."/>
            <person name="Borkova D."/>
            <person name="Botchan M.R."/>
            <person name="Bouck J."/>
            <person name="Brokstein P."/>
            <person name="Brottier P."/>
            <person name="Burtis K.C."/>
            <person name="Busam D.A."/>
            <person name="Butler H."/>
            <person name="Cadieu E."/>
            <person name="Center A."/>
            <person name="Chandra I."/>
            <person name="Cherry J.M."/>
            <person name="Cawley S."/>
            <person name="Dahlke C."/>
            <person name="Davenport L.B."/>
            <person name="Davies P."/>
            <person name="de Pablos B."/>
            <person name="Delcher A."/>
            <person name="Deng Z."/>
            <person name="Mays A.D."/>
            <person name="Dew I."/>
            <person name="Dietz S.M."/>
            <person name="Dodson K."/>
            <person name="Doup L.E."/>
            <person name="Downes M."/>
            <person name="Dugan-Rocha S."/>
            <person name="Dunkov B.C."/>
            <person name="Dunn P."/>
            <person name="Durbin K.J."/>
            <person name="Evangelista C.C."/>
            <person name="Ferraz C."/>
            <person name="Ferriera S."/>
            <person name="Fleischmann W."/>
            <person name="Fosler C."/>
            <person name="Gabrielian A.E."/>
            <person name="Garg N.S."/>
            <person name="Gelbart W.M."/>
            <person name="Glasser K."/>
            <person name="Glodek A."/>
            <person name="Gong F."/>
            <person name="Gorrell J.H."/>
            <person name="Gu Z."/>
            <person name="Guan P."/>
            <person name="Harris M."/>
            <person name="Harris N.L."/>
            <person name="Harvey D.A."/>
            <person name="Heiman T.J."/>
            <person name="Hernandez J.R."/>
            <person name="Houck J."/>
            <person name="Hostin D."/>
            <person name="Houston K.A."/>
            <person name="Howland T.J."/>
            <person name="Wei M.-H."/>
            <person name="Ibegwam C."/>
            <person name="Jalali M."/>
            <person name="Kalush F."/>
            <person name="Karpen G.H."/>
            <person name="Ke Z."/>
            <person name="Kennison J.A."/>
            <person name="Ketchum K.A."/>
            <person name="Kimmel B.E."/>
            <person name="Kodira C.D."/>
            <person name="Kraft C.L."/>
            <person name="Kravitz S."/>
            <person name="Kulp D."/>
            <person name="Lai Z."/>
            <person name="Lasko P."/>
            <person name="Lei Y."/>
            <person name="Levitsky A.A."/>
            <person name="Li J.H."/>
            <person name="Li Z."/>
            <person name="Liang Y."/>
            <person name="Lin X."/>
            <person name="Liu X."/>
            <person name="Mattei B."/>
            <person name="McIntosh T.C."/>
            <person name="McLeod M.P."/>
            <person name="McPherson D."/>
            <person name="Merkulov G."/>
            <person name="Milshina N.V."/>
            <person name="Mobarry C."/>
            <person name="Morris J."/>
            <person name="Moshrefi A."/>
            <person name="Mount S.M."/>
            <person name="Moy M."/>
            <person name="Murphy B."/>
            <person name="Murphy L."/>
            <person name="Muzny D.M."/>
            <person name="Nelson D.L."/>
            <person name="Nelson D.R."/>
            <person name="Nelson K.A."/>
            <person name="Nixon K."/>
            <person name="Nusskern D.R."/>
            <person name="Pacleb J.M."/>
            <person name="Palazzolo M."/>
            <person name="Pittman G.S."/>
            <person name="Pan S."/>
            <person name="Pollard J."/>
            <person name="Puri V."/>
            <person name="Reese M.G."/>
            <person name="Reinert K."/>
            <person name="Remington K."/>
            <person name="Saunders R.D.C."/>
            <person name="Scheeler F."/>
            <person name="Shen H."/>
            <person name="Shue B.C."/>
            <person name="Siden-Kiamos I."/>
            <person name="Simpson M."/>
            <person name="Skupski M.P."/>
            <person name="Smith T.J."/>
            <person name="Spier E."/>
            <person name="Spradling A.C."/>
            <person name="Stapleton M."/>
            <person name="Strong R."/>
            <person name="Sun E."/>
            <person name="Svirskas R."/>
            <person name="Tector C."/>
            <person name="Turner R."/>
            <person name="Venter E."/>
            <person name="Wang A.H."/>
            <person name="Wang X."/>
            <person name="Wang Z.-Y."/>
            <person name="Wassarman D.A."/>
            <person name="Weinstock G.M."/>
            <person name="Weissenbach J."/>
            <person name="Williams S.M."/>
            <person name="Woodage T."/>
            <person name="Worley K.C."/>
            <person name="Wu D."/>
            <person name="Yang S."/>
            <person name="Yao Q.A."/>
            <person name="Ye J."/>
            <person name="Yeh R.-F."/>
            <person name="Zaveri J.S."/>
            <person name="Zhan M."/>
            <person name="Zhang G."/>
            <person name="Zhao Q."/>
            <person name="Zheng L."/>
            <person name="Zheng X.H."/>
            <person name="Zhong F.N."/>
            <person name="Zhong W."/>
            <person name="Zhou X."/>
            <person name="Zhu S.C."/>
            <person name="Zhu X."/>
            <person name="Smith H.O."/>
            <person name="Gibbs R.A."/>
            <person name="Myers E.W."/>
            <person name="Rubin G.M."/>
            <person name="Venter J.C."/>
        </authorList>
    </citation>
    <scope>NUCLEOTIDE SEQUENCE [LARGE SCALE GENOMIC DNA]</scope>
    <source>
        <strain>Berkeley</strain>
    </source>
</reference>
<reference key="3">
    <citation type="journal article" date="2002" name="Genome Biol.">
        <title>Annotation of the Drosophila melanogaster euchromatic genome: a systematic review.</title>
        <authorList>
            <person name="Misra S."/>
            <person name="Crosby M.A."/>
            <person name="Mungall C.J."/>
            <person name="Matthews B.B."/>
            <person name="Campbell K.S."/>
            <person name="Hradecky P."/>
            <person name="Huang Y."/>
            <person name="Kaminker J.S."/>
            <person name="Millburn G.H."/>
            <person name="Prochnik S.E."/>
            <person name="Smith C.D."/>
            <person name="Tupy J.L."/>
            <person name="Whitfield E.J."/>
            <person name="Bayraktaroglu L."/>
            <person name="Berman B.P."/>
            <person name="Bettencourt B.R."/>
            <person name="Celniker S.E."/>
            <person name="de Grey A.D.N.J."/>
            <person name="Drysdale R.A."/>
            <person name="Harris N.L."/>
            <person name="Richter J."/>
            <person name="Russo S."/>
            <person name="Schroeder A.J."/>
            <person name="Shu S.Q."/>
            <person name="Stapleton M."/>
            <person name="Yamada C."/>
            <person name="Ashburner M."/>
            <person name="Gelbart W.M."/>
            <person name="Rubin G.M."/>
            <person name="Lewis S.E."/>
        </authorList>
    </citation>
    <scope>GENOME REANNOTATION</scope>
    <source>
        <strain>Berkeley</strain>
    </source>
</reference>
<evidence type="ECO:0000255" key="1"/>
<evidence type="ECO:0000255" key="2">
    <source>
        <dbReference type="PROSITE-ProRule" id="PRU00134"/>
    </source>
</evidence>
<evidence type="ECO:0000255" key="3">
    <source>
        <dbReference type="PROSITE-ProRule" id="PRU00185"/>
    </source>
</evidence>
<evidence type="ECO:0000256" key="4">
    <source>
        <dbReference type="SAM" id="MobiDB-lite"/>
    </source>
</evidence>
<dbReference type="EMBL" id="AE014296">
    <property type="protein sequence ID" value="AAF49105.1"/>
    <property type="molecule type" value="Genomic_DNA"/>
</dbReference>
<dbReference type="EMBL" id="U46686">
    <property type="protein sequence ID" value="AAC47040.1"/>
    <property type="molecule type" value="mRNA"/>
</dbReference>
<dbReference type="PIR" id="S69214">
    <property type="entry name" value="S69214"/>
</dbReference>
<dbReference type="RefSeq" id="NP_001262069.1">
    <property type="nucleotide sequence ID" value="NM_001275140.1"/>
</dbReference>
<dbReference type="RefSeq" id="NP_524169.1">
    <property type="nucleotide sequence ID" value="NM_079445.3"/>
</dbReference>
<dbReference type="SMR" id="Q24180"/>
<dbReference type="BioGRID" id="65433">
    <property type="interactions" value="70"/>
</dbReference>
<dbReference type="DIP" id="DIP-18732N"/>
<dbReference type="FunCoup" id="Q24180">
    <property type="interactions" value="1004"/>
</dbReference>
<dbReference type="IntAct" id="Q24180">
    <property type="interactions" value="21"/>
</dbReference>
<dbReference type="STRING" id="7227.FBpp0304463"/>
<dbReference type="PaxDb" id="7227-FBpp0304463"/>
<dbReference type="DNASU" id="40164"/>
<dbReference type="EnsemblMetazoa" id="FBtr0074882">
    <property type="protein sequence ID" value="FBpp0074651"/>
    <property type="gene ID" value="FBgn0013799"/>
</dbReference>
<dbReference type="EnsemblMetazoa" id="FBtr0332153">
    <property type="protein sequence ID" value="FBpp0304463"/>
    <property type="gene ID" value="FBgn0013799"/>
</dbReference>
<dbReference type="GeneID" id="40164"/>
<dbReference type="KEGG" id="dme:Dmel_CG8567"/>
<dbReference type="AGR" id="FB:FBgn0013799"/>
<dbReference type="CTD" id="10522"/>
<dbReference type="FlyBase" id="FBgn0013799">
    <property type="gene designation" value="Deaf1"/>
</dbReference>
<dbReference type="VEuPathDB" id="VectorBase:FBgn0013799"/>
<dbReference type="eggNOG" id="KOG4333">
    <property type="taxonomic scope" value="Eukaryota"/>
</dbReference>
<dbReference type="GeneTree" id="ENSGT00940000159701"/>
<dbReference type="InParanoid" id="Q24180"/>
<dbReference type="OMA" id="KDHQHSC"/>
<dbReference type="OrthoDB" id="437457at2759"/>
<dbReference type="PhylomeDB" id="Q24180"/>
<dbReference type="SignaLink" id="Q24180"/>
<dbReference type="BioGRID-ORCS" id="40164">
    <property type="hits" value="0 hits in 1 CRISPR screen"/>
</dbReference>
<dbReference type="GenomeRNAi" id="40164"/>
<dbReference type="PRO" id="PR:Q24180"/>
<dbReference type="Proteomes" id="UP000000803">
    <property type="component" value="Chromosome 3L"/>
</dbReference>
<dbReference type="Bgee" id="FBgn0013799">
    <property type="expression patterns" value="Expressed in distal medullary amacrine neuron Dm11 in insect head and 223 other cell types or tissues"/>
</dbReference>
<dbReference type="ExpressionAtlas" id="Q24180">
    <property type="expression patterns" value="baseline and differential"/>
</dbReference>
<dbReference type="GO" id="GO:0005634">
    <property type="term" value="C:nucleus"/>
    <property type="evidence" value="ECO:0000314"/>
    <property type="project" value="UniProtKB"/>
</dbReference>
<dbReference type="GO" id="GO:0005700">
    <property type="term" value="C:polytene chromosome"/>
    <property type="evidence" value="ECO:0000314"/>
    <property type="project" value="FlyBase"/>
</dbReference>
<dbReference type="GO" id="GO:0003700">
    <property type="term" value="F:DNA-binding transcription factor activity"/>
    <property type="evidence" value="ECO:0000314"/>
    <property type="project" value="FlyBase"/>
</dbReference>
<dbReference type="GO" id="GO:0000981">
    <property type="term" value="F:DNA-binding transcription factor activity, RNA polymerase II-specific"/>
    <property type="evidence" value="ECO:0000318"/>
    <property type="project" value="GO_Central"/>
</dbReference>
<dbReference type="GO" id="GO:0043565">
    <property type="term" value="F:sequence-specific DNA binding"/>
    <property type="evidence" value="ECO:0000314"/>
    <property type="project" value="FlyBase"/>
</dbReference>
<dbReference type="GO" id="GO:0008270">
    <property type="term" value="F:zinc ion binding"/>
    <property type="evidence" value="ECO:0007669"/>
    <property type="project" value="UniProtKB-KW"/>
</dbReference>
<dbReference type="GO" id="GO:0009792">
    <property type="term" value="P:embryo development ending in birth or egg hatching"/>
    <property type="evidence" value="ECO:0000315"/>
    <property type="project" value="FlyBase"/>
</dbReference>
<dbReference type="GO" id="GO:0045893">
    <property type="term" value="P:positive regulation of DNA-templated transcription"/>
    <property type="evidence" value="ECO:0000314"/>
    <property type="project" value="FlyBase"/>
</dbReference>
<dbReference type="GO" id="GO:0050776">
    <property type="term" value="P:regulation of immune response"/>
    <property type="evidence" value="ECO:0000314"/>
    <property type="project" value="FlyBase"/>
</dbReference>
<dbReference type="GO" id="GO:0006357">
    <property type="term" value="P:regulation of transcription by RNA polymerase II"/>
    <property type="evidence" value="ECO:0000314"/>
    <property type="project" value="FlyBase"/>
</dbReference>
<dbReference type="FunFam" id="3.10.390.10:FF:000007">
    <property type="entry name" value="Deformed epidermal autoregulatory factor 1"/>
    <property type="match status" value="1"/>
</dbReference>
<dbReference type="FunFam" id="6.10.140.2220:FF:000008">
    <property type="entry name" value="Deformed epidermal autoregulatory factor 1"/>
    <property type="match status" value="1"/>
</dbReference>
<dbReference type="Gene3D" id="6.10.140.2220">
    <property type="match status" value="1"/>
</dbReference>
<dbReference type="Gene3D" id="3.10.390.10">
    <property type="entry name" value="SAND domain-like"/>
    <property type="match status" value="1"/>
</dbReference>
<dbReference type="InterPro" id="IPR010919">
    <property type="entry name" value="SAND-like_dom_sf"/>
</dbReference>
<dbReference type="InterPro" id="IPR000770">
    <property type="entry name" value="SAND_dom"/>
</dbReference>
<dbReference type="InterPro" id="IPR024119">
    <property type="entry name" value="TF_DEAF-1"/>
</dbReference>
<dbReference type="InterPro" id="IPR002893">
    <property type="entry name" value="Znf_MYND"/>
</dbReference>
<dbReference type="PANTHER" id="PTHR10237:SF1">
    <property type="entry name" value="DEFORMED EPIDERMAL AUTOREGULATORY FACTOR 1 HOMOLOG"/>
    <property type="match status" value="1"/>
</dbReference>
<dbReference type="PANTHER" id="PTHR10237">
    <property type="entry name" value="DEFORMED EPIDERMAL AUTOREGULATORY FACTOR 1 HOMOLOG SUPPRESSIN"/>
    <property type="match status" value="1"/>
</dbReference>
<dbReference type="Pfam" id="PF01342">
    <property type="entry name" value="SAND"/>
    <property type="match status" value="1"/>
</dbReference>
<dbReference type="Pfam" id="PF01753">
    <property type="entry name" value="zf-MYND"/>
    <property type="match status" value="1"/>
</dbReference>
<dbReference type="SMART" id="SM00258">
    <property type="entry name" value="SAND"/>
    <property type="match status" value="1"/>
</dbReference>
<dbReference type="SUPFAM" id="SSF144232">
    <property type="entry name" value="HIT/MYND zinc finger-like"/>
    <property type="match status" value="1"/>
</dbReference>
<dbReference type="SUPFAM" id="SSF63763">
    <property type="entry name" value="SAND domain-like"/>
    <property type="match status" value="1"/>
</dbReference>
<dbReference type="PROSITE" id="PS50864">
    <property type="entry name" value="SAND"/>
    <property type="match status" value="1"/>
</dbReference>
<dbReference type="PROSITE" id="PS01360">
    <property type="entry name" value="ZF_MYND_1"/>
    <property type="match status" value="1"/>
</dbReference>
<dbReference type="PROSITE" id="PS50865">
    <property type="entry name" value="ZF_MYND_2"/>
    <property type="match status" value="1"/>
</dbReference>
<proteinExistence type="evidence at protein level"/>
<gene>
    <name type="primary">Deaf1</name>
    <name type="ORF">CG8567</name>
</gene>
<accession>Q24180</accession>
<feature type="chain" id="PRO_0000074088" description="Deformed epidermal autoregulatory factor 1">
    <location>
        <begin position="1"/>
        <end position="576"/>
    </location>
</feature>
<feature type="domain" description="SAND" evidence="3">
    <location>
        <begin position="210"/>
        <end position="291"/>
    </location>
</feature>
<feature type="zinc finger region" description="MYND-type" evidence="2">
    <location>
        <begin position="521"/>
        <end position="557"/>
    </location>
</feature>
<feature type="region of interest" description="Disordered" evidence="4">
    <location>
        <begin position="52"/>
        <end position="76"/>
    </location>
</feature>
<feature type="region of interest" description="Disordered" evidence="4">
    <location>
        <begin position="189"/>
        <end position="215"/>
    </location>
</feature>
<feature type="region of interest" description="Disordered" evidence="4">
    <location>
        <begin position="309"/>
        <end position="362"/>
    </location>
</feature>
<feature type="short sequence motif" description="Nuclear localization signal" evidence="1">
    <location>
        <begin position="324"/>
        <end position="340"/>
    </location>
</feature>
<feature type="compositionally biased region" description="Gly residues" evidence="4">
    <location>
        <begin position="61"/>
        <end position="76"/>
    </location>
</feature>
<feature type="compositionally biased region" description="Gly residues" evidence="4">
    <location>
        <begin position="191"/>
        <end position="207"/>
    </location>
</feature>
<feature type="compositionally biased region" description="Low complexity" evidence="4">
    <location>
        <begin position="345"/>
        <end position="362"/>
    </location>
</feature>
<feature type="binding site" evidence="2">
    <location>
        <position position="521"/>
    </location>
    <ligand>
        <name>Zn(2+)</name>
        <dbReference type="ChEBI" id="CHEBI:29105"/>
        <label>1</label>
    </ligand>
</feature>
<feature type="binding site" evidence="2">
    <location>
        <position position="524"/>
    </location>
    <ligand>
        <name>Zn(2+)</name>
        <dbReference type="ChEBI" id="CHEBI:29105"/>
        <label>1</label>
    </ligand>
</feature>
<feature type="binding site" evidence="2">
    <location>
        <position position="532"/>
    </location>
    <ligand>
        <name>Zn(2+)</name>
        <dbReference type="ChEBI" id="CHEBI:29105"/>
        <label>2</label>
    </ligand>
</feature>
<feature type="binding site" evidence="2">
    <location>
        <position position="535"/>
    </location>
    <ligand>
        <name>Zn(2+)</name>
        <dbReference type="ChEBI" id="CHEBI:29105"/>
        <label>2</label>
    </ligand>
</feature>
<feature type="binding site" evidence="2">
    <location>
        <position position="541"/>
    </location>
    <ligand>
        <name>Zn(2+)</name>
        <dbReference type="ChEBI" id="CHEBI:29105"/>
        <label>1</label>
    </ligand>
</feature>
<feature type="binding site" evidence="2">
    <location>
        <position position="545"/>
    </location>
    <ligand>
        <name>Zn(2+)</name>
        <dbReference type="ChEBI" id="CHEBI:29105"/>
        <label>1</label>
    </ligand>
</feature>
<feature type="binding site" evidence="2">
    <location>
        <position position="553"/>
    </location>
    <ligand>
        <name>Zn(2+)</name>
        <dbReference type="ChEBI" id="CHEBI:29105"/>
        <label>2</label>
    </ligand>
</feature>
<feature type="binding site" evidence="2">
    <location>
        <position position="557"/>
    </location>
    <ligand>
        <name>Zn(2+)</name>
        <dbReference type="ChEBI" id="CHEBI:29105"/>
        <label>2</label>
    </ligand>
</feature>